<protein>
    <recommendedName>
        <fullName evidence="1">Fumarate hydratase class II</fullName>
        <shortName evidence="1">Fumarase C</shortName>
        <ecNumber evidence="1">4.2.1.2</ecNumber>
    </recommendedName>
    <alternativeName>
        <fullName evidence="1">Aerobic fumarase</fullName>
    </alternativeName>
    <alternativeName>
        <fullName evidence="1">Iron-independent fumarase</fullName>
    </alternativeName>
</protein>
<organism>
    <name type="scientific">Nitrosomonas europaea (strain ATCC 19718 / CIP 103999 / KCTC 2705 / NBRC 14298)</name>
    <dbReference type="NCBI Taxonomy" id="228410"/>
    <lineage>
        <taxon>Bacteria</taxon>
        <taxon>Pseudomonadati</taxon>
        <taxon>Pseudomonadota</taxon>
        <taxon>Betaproteobacteria</taxon>
        <taxon>Nitrosomonadales</taxon>
        <taxon>Nitrosomonadaceae</taxon>
        <taxon>Nitrosomonas</taxon>
    </lineage>
</organism>
<keyword id="KW-0963">Cytoplasm</keyword>
<keyword id="KW-0456">Lyase</keyword>
<keyword id="KW-1185">Reference proteome</keyword>
<keyword id="KW-0816">Tricarboxylic acid cycle</keyword>
<reference key="1">
    <citation type="journal article" date="2003" name="J. Bacteriol.">
        <title>Complete genome sequence of the ammonia-oxidizing bacterium and obligate chemolithoautotroph Nitrosomonas europaea.</title>
        <authorList>
            <person name="Chain P."/>
            <person name="Lamerdin J.E."/>
            <person name="Larimer F.W."/>
            <person name="Regala W."/>
            <person name="Lao V."/>
            <person name="Land M.L."/>
            <person name="Hauser L."/>
            <person name="Hooper A.B."/>
            <person name="Klotz M.G."/>
            <person name="Norton J."/>
            <person name="Sayavedra-Soto L.A."/>
            <person name="Arciero D.M."/>
            <person name="Hommes N.G."/>
            <person name="Whittaker M.M."/>
            <person name="Arp D.J."/>
        </authorList>
    </citation>
    <scope>NUCLEOTIDE SEQUENCE [LARGE SCALE GENOMIC DNA]</scope>
    <source>
        <strain>ATCC 19718 / CIP 103999 / KCTC 2705 / NBRC 14298</strain>
    </source>
</reference>
<feature type="chain" id="PRO_0000161292" description="Fumarate hydratase class II">
    <location>
        <begin position="1"/>
        <end position="462"/>
    </location>
</feature>
<feature type="region of interest" description="Disordered" evidence="2">
    <location>
        <begin position="120"/>
        <end position="141"/>
    </location>
</feature>
<feature type="active site" description="Proton donor/acceptor" evidence="1">
    <location>
        <position position="188"/>
    </location>
</feature>
<feature type="active site" evidence="1">
    <location>
        <position position="318"/>
    </location>
</feature>
<feature type="binding site" evidence="1">
    <location>
        <begin position="98"/>
        <end position="100"/>
    </location>
    <ligand>
        <name>substrate</name>
    </ligand>
</feature>
<feature type="binding site" evidence="1">
    <location>
        <position position="126"/>
    </location>
    <ligand>
        <name>substrate</name>
    </ligand>
</feature>
<feature type="binding site" description="in site B" evidence="1">
    <location>
        <begin position="129"/>
        <end position="132"/>
    </location>
    <ligand>
        <name>substrate</name>
    </ligand>
</feature>
<feature type="binding site" evidence="1">
    <location>
        <begin position="139"/>
        <end position="141"/>
    </location>
    <ligand>
        <name>substrate</name>
    </ligand>
</feature>
<feature type="binding site" evidence="1">
    <location>
        <position position="187"/>
    </location>
    <ligand>
        <name>substrate</name>
    </ligand>
</feature>
<feature type="binding site" evidence="1">
    <location>
        <position position="319"/>
    </location>
    <ligand>
        <name>substrate</name>
    </ligand>
</feature>
<feature type="binding site" evidence="1">
    <location>
        <begin position="324"/>
        <end position="326"/>
    </location>
    <ligand>
        <name>substrate</name>
    </ligand>
</feature>
<feature type="site" description="Important for catalytic activity" evidence="1">
    <location>
        <position position="331"/>
    </location>
</feature>
<name>FUMC_NITEU</name>
<evidence type="ECO:0000255" key="1">
    <source>
        <dbReference type="HAMAP-Rule" id="MF_00743"/>
    </source>
</evidence>
<evidence type="ECO:0000256" key="2">
    <source>
        <dbReference type="SAM" id="MobiDB-lite"/>
    </source>
</evidence>
<sequence length="462" mass="49530">MDQYREEHDAIGTVQVPASALWGAQTQRSLNNFNISGERMPSALIHALALVKRAAASVNHDLGLLDENIARAIITAADEVLAGEHAGEFPLVVWQTGSGTQTNMNMNEVLANRASEILGGTRGKGRKVHPNDHVNKGQSSNDVFPTAMHIAAVEAIRNRLIPALEALRKTLSSKSAAFSDIVKIGRTHLQDATPLTLGQEFSGYVSQLDHGLAHLESALPHLLELALGGTAVGTGLNTHPEFARRVAAEIARLSGYPFITAANKFEALAAHDALVHAHGVLKTLAAILIKIANDVRWLASGPRCGIGEILIPENEPGSSIMPGKVNPTQSEAVVMLACQVMGNDVAINLGGAMGNFELNTMKPLIIHNFLQSTRLLADGAESFNTHCAAGITANTVRIKQHLQESLMLVTALNPHIGYDKAAEIAKKAHHEMLTLKEAAIRLGYVTAEQFDVWVDPQKMTEV</sequence>
<gene>
    <name evidence="1" type="primary">fumC</name>
    <name type="ordered locus">NE2286</name>
</gene>
<comment type="function">
    <text evidence="1">Involved in the TCA cycle. Catalyzes the stereospecific interconversion of fumarate to L-malate.</text>
</comment>
<comment type="catalytic activity">
    <reaction evidence="1">
        <text>(S)-malate = fumarate + H2O</text>
        <dbReference type="Rhea" id="RHEA:12460"/>
        <dbReference type="ChEBI" id="CHEBI:15377"/>
        <dbReference type="ChEBI" id="CHEBI:15589"/>
        <dbReference type="ChEBI" id="CHEBI:29806"/>
        <dbReference type="EC" id="4.2.1.2"/>
    </reaction>
</comment>
<comment type="pathway">
    <text evidence="1">Carbohydrate metabolism; tricarboxylic acid cycle; (S)-malate from fumarate: step 1/1.</text>
</comment>
<comment type="subunit">
    <text evidence="1">Homotetramer.</text>
</comment>
<comment type="subcellular location">
    <subcellularLocation>
        <location evidence="1">Cytoplasm</location>
    </subcellularLocation>
</comment>
<comment type="miscellaneous">
    <text evidence="1">There are 2 substrate-binding sites: the catalytic A site, and the non-catalytic B site that may play a role in the transfer of substrate or product between the active site and the solvent. Alternatively, the B site may bind allosteric effectors.</text>
</comment>
<comment type="similarity">
    <text evidence="1">Belongs to the class-II fumarase/aspartase family. Fumarase subfamily.</text>
</comment>
<accession>Q82SM5</accession>
<dbReference type="EC" id="4.2.1.2" evidence="1"/>
<dbReference type="EMBL" id="AL954747">
    <property type="protein sequence ID" value="CAD86198.1"/>
    <property type="molecule type" value="Genomic_DNA"/>
</dbReference>
<dbReference type="RefSeq" id="WP_011112773.1">
    <property type="nucleotide sequence ID" value="NC_004757.1"/>
</dbReference>
<dbReference type="SMR" id="Q82SM5"/>
<dbReference type="STRING" id="228410.NE2286"/>
<dbReference type="GeneID" id="87105419"/>
<dbReference type="KEGG" id="neu:NE2286"/>
<dbReference type="eggNOG" id="COG0114">
    <property type="taxonomic scope" value="Bacteria"/>
</dbReference>
<dbReference type="HOGENOM" id="CLU_021594_4_1_4"/>
<dbReference type="OrthoDB" id="9802809at2"/>
<dbReference type="PhylomeDB" id="Q82SM5"/>
<dbReference type="UniPathway" id="UPA00223">
    <property type="reaction ID" value="UER01007"/>
</dbReference>
<dbReference type="Proteomes" id="UP000001416">
    <property type="component" value="Chromosome"/>
</dbReference>
<dbReference type="GO" id="GO:0005737">
    <property type="term" value="C:cytoplasm"/>
    <property type="evidence" value="ECO:0007669"/>
    <property type="project" value="UniProtKB-SubCell"/>
</dbReference>
<dbReference type="GO" id="GO:0004333">
    <property type="term" value="F:fumarate hydratase activity"/>
    <property type="evidence" value="ECO:0007669"/>
    <property type="project" value="UniProtKB-UniRule"/>
</dbReference>
<dbReference type="GO" id="GO:0006106">
    <property type="term" value="P:fumarate metabolic process"/>
    <property type="evidence" value="ECO:0007669"/>
    <property type="project" value="InterPro"/>
</dbReference>
<dbReference type="GO" id="GO:0006108">
    <property type="term" value="P:malate metabolic process"/>
    <property type="evidence" value="ECO:0007669"/>
    <property type="project" value="TreeGrafter"/>
</dbReference>
<dbReference type="GO" id="GO:0006099">
    <property type="term" value="P:tricarboxylic acid cycle"/>
    <property type="evidence" value="ECO:0007669"/>
    <property type="project" value="UniProtKB-UniRule"/>
</dbReference>
<dbReference type="CDD" id="cd01362">
    <property type="entry name" value="Fumarase_classII"/>
    <property type="match status" value="1"/>
</dbReference>
<dbReference type="FunFam" id="1.10.40.30:FF:000002">
    <property type="entry name" value="Fumarate hydratase class II"/>
    <property type="match status" value="1"/>
</dbReference>
<dbReference type="FunFam" id="1.10.275.10:FF:000001">
    <property type="entry name" value="Fumarate hydratase, mitochondrial"/>
    <property type="match status" value="1"/>
</dbReference>
<dbReference type="FunFam" id="1.20.200.10:FF:000001">
    <property type="entry name" value="Fumarate hydratase, mitochondrial"/>
    <property type="match status" value="1"/>
</dbReference>
<dbReference type="Gene3D" id="1.10.40.30">
    <property type="entry name" value="Fumarase/aspartase (C-terminal domain)"/>
    <property type="match status" value="1"/>
</dbReference>
<dbReference type="Gene3D" id="1.20.200.10">
    <property type="entry name" value="Fumarase/aspartase (Central domain)"/>
    <property type="match status" value="1"/>
</dbReference>
<dbReference type="Gene3D" id="1.10.275.10">
    <property type="entry name" value="Fumarase/aspartase (N-terminal domain)"/>
    <property type="match status" value="1"/>
</dbReference>
<dbReference type="HAMAP" id="MF_00743">
    <property type="entry name" value="FumaraseC"/>
    <property type="match status" value="1"/>
</dbReference>
<dbReference type="InterPro" id="IPR005677">
    <property type="entry name" value="Fum_hydII"/>
</dbReference>
<dbReference type="InterPro" id="IPR024083">
    <property type="entry name" value="Fumarase/histidase_N"/>
</dbReference>
<dbReference type="InterPro" id="IPR018951">
    <property type="entry name" value="Fumarase_C_C"/>
</dbReference>
<dbReference type="InterPro" id="IPR020557">
    <property type="entry name" value="Fumarate_lyase_CS"/>
</dbReference>
<dbReference type="InterPro" id="IPR000362">
    <property type="entry name" value="Fumarate_lyase_fam"/>
</dbReference>
<dbReference type="InterPro" id="IPR022761">
    <property type="entry name" value="Fumarate_lyase_N"/>
</dbReference>
<dbReference type="InterPro" id="IPR008948">
    <property type="entry name" value="L-Aspartase-like"/>
</dbReference>
<dbReference type="NCBIfam" id="TIGR00979">
    <property type="entry name" value="fumC_II"/>
    <property type="match status" value="1"/>
</dbReference>
<dbReference type="NCBIfam" id="NF008909">
    <property type="entry name" value="PRK12273.1"/>
    <property type="match status" value="1"/>
</dbReference>
<dbReference type="PANTHER" id="PTHR11444">
    <property type="entry name" value="ASPARTATEAMMONIA/ARGININOSUCCINATE/ADENYLOSUCCINATE LYASE"/>
    <property type="match status" value="1"/>
</dbReference>
<dbReference type="PANTHER" id="PTHR11444:SF1">
    <property type="entry name" value="FUMARATE HYDRATASE, MITOCHONDRIAL"/>
    <property type="match status" value="1"/>
</dbReference>
<dbReference type="Pfam" id="PF10415">
    <property type="entry name" value="FumaraseC_C"/>
    <property type="match status" value="1"/>
</dbReference>
<dbReference type="Pfam" id="PF00206">
    <property type="entry name" value="Lyase_1"/>
    <property type="match status" value="1"/>
</dbReference>
<dbReference type="PRINTS" id="PR00145">
    <property type="entry name" value="ARGSUCLYASE"/>
</dbReference>
<dbReference type="PRINTS" id="PR00149">
    <property type="entry name" value="FUMRATELYASE"/>
</dbReference>
<dbReference type="SUPFAM" id="SSF48557">
    <property type="entry name" value="L-aspartase-like"/>
    <property type="match status" value="1"/>
</dbReference>
<dbReference type="PROSITE" id="PS00163">
    <property type="entry name" value="FUMARATE_LYASES"/>
    <property type="match status" value="1"/>
</dbReference>
<proteinExistence type="inferred from homology"/>